<comment type="function">
    <text evidence="1">Exhibits S-adenosyl-L-methionine-dependent methyltransferase activity.</text>
</comment>
<comment type="similarity">
    <text evidence="2">Belongs to the UPF0677 family.</text>
</comment>
<sequence length="315" mass="34842">MSTARTDDDSWEITESVGATALGVASARAAETRSENPLIKDPFAQVFLDAAGDGVWNWHSAPQLPPELIEAEPTIPLQQQAMVSYMASRTAFFDSFFLEATGAGIRQAVILAAGLDARSWRLPWPAGTTVYELDQPRVLEFKESTLAEHGAQPACNRVAVPVDLRHDWPEALRQAGFDASAPSVWSAEGLMPYLPAAAQDLLFDRIQGLTVAGSRVAVEALGPKFLDPQARAKRRERMDRIQALMARIDPDRAVPRTDELWYFEEREDVGEWFGRHGWDVRVTPSDELMAGYGRPAPAEVRDFVPGNLFVAAQRR</sequence>
<gene>
    <name type="ordered locus">MAV_4557</name>
</gene>
<dbReference type="EC" id="2.1.1.-"/>
<dbReference type="EMBL" id="CP000479">
    <property type="protein sequence ID" value="ABK66928.1"/>
    <property type="molecule type" value="Genomic_DNA"/>
</dbReference>
<dbReference type="RefSeq" id="WP_011726123.1">
    <property type="nucleotide sequence ID" value="NC_008595.1"/>
</dbReference>
<dbReference type="SMR" id="A0QL99"/>
<dbReference type="KEGG" id="mav:MAV_4557"/>
<dbReference type="HOGENOM" id="CLU_056160_2_1_11"/>
<dbReference type="Proteomes" id="UP000001574">
    <property type="component" value="Chromosome"/>
</dbReference>
<dbReference type="GO" id="GO:0008168">
    <property type="term" value="F:methyltransferase activity"/>
    <property type="evidence" value="ECO:0007669"/>
    <property type="project" value="UniProtKB-KW"/>
</dbReference>
<dbReference type="GO" id="GO:0032259">
    <property type="term" value="P:methylation"/>
    <property type="evidence" value="ECO:0007669"/>
    <property type="project" value="UniProtKB-KW"/>
</dbReference>
<dbReference type="Gene3D" id="3.40.50.150">
    <property type="entry name" value="Vaccinia Virus protein VP39"/>
    <property type="match status" value="1"/>
</dbReference>
<dbReference type="InterPro" id="IPR007213">
    <property type="entry name" value="Ppm1/Ppm2/Tcmp"/>
</dbReference>
<dbReference type="InterPro" id="IPR029063">
    <property type="entry name" value="SAM-dependent_MTases_sf"/>
</dbReference>
<dbReference type="InterPro" id="IPR011610">
    <property type="entry name" value="SAM_mthyl_Trfase_ML2640-like"/>
</dbReference>
<dbReference type="NCBIfam" id="TIGR00027">
    <property type="entry name" value="mthyl_TIGR00027"/>
    <property type="match status" value="1"/>
</dbReference>
<dbReference type="PANTHER" id="PTHR43619">
    <property type="entry name" value="S-ADENOSYL-L-METHIONINE-DEPENDENT METHYLTRANSFERASE YKTD-RELATED"/>
    <property type="match status" value="1"/>
</dbReference>
<dbReference type="PANTHER" id="PTHR43619:SF2">
    <property type="entry name" value="S-ADENOSYL-L-METHIONINE-DEPENDENT METHYLTRANSFERASES SUPERFAMILY PROTEIN"/>
    <property type="match status" value="1"/>
</dbReference>
<dbReference type="Pfam" id="PF04072">
    <property type="entry name" value="LCM"/>
    <property type="match status" value="1"/>
</dbReference>
<dbReference type="SUPFAM" id="SSF53335">
    <property type="entry name" value="S-adenosyl-L-methionine-dependent methyltransferases"/>
    <property type="match status" value="1"/>
</dbReference>
<accession>A0QL99</accession>
<evidence type="ECO:0000250" key="1"/>
<evidence type="ECO:0000305" key="2"/>
<organism>
    <name type="scientific">Mycobacterium avium (strain 104)</name>
    <dbReference type="NCBI Taxonomy" id="243243"/>
    <lineage>
        <taxon>Bacteria</taxon>
        <taxon>Bacillati</taxon>
        <taxon>Actinomycetota</taxon>
        <taxon>Actinomycetes</taxon>
        <taxon>Mycobacteriales</taxon>
        <taxon>Mycobacteriaceae</taxon>
        <taxon>Mycobacterium</taxon>
        <taxon>Mycobacterium avium complex (MAC)</taxon>
    </lineage>
</organism>
<name>Y4557_MYCA1</name>
<proteinExistence type="inferred from homology"/>
<reference key="1">
    <citation type="submission" date="2006-10" db="EMBL/GenBank/DDBJ databases">
        <authorList>
            <person name="Fleischmann R.D."/>
            <person name="Dodson R.J."/>
            <person name="Haft D.H."/>
            <person name="Merkel J.S."/>
            <person name="Nelson W.C."/>
            <person name="Fraser C.M."/>
        </authorList>
    </citation>
    <scope>NUCLEOTIDE SEQUENCE [LARGE SCALE GENOMIC DNA]</scope>
    <source>
        <strain>104</strain>
    </source>
</reference>
<protein>
    <recommendedName>
        <fullName>Putative S-adenosyl-L-methionine-dependent methyltransferase MAV_4557</fullName>
        <ecNumber>2.1.1.-</ecNumber>
    </recommendedName>
</protein>
<feature type="chain" id="PRO_0000361111" description="Putative S-adenosyl-L-methionine-dependent methyltransferase MAV_4557">
    <location>
        <begin position="1"/>
        <end position="315"/>
    </location>
</feature>
<feature type="binding site" evidence="1">
    <location>
        <position position="134"/>
    </location>
    <ligand>
        <name>S-adenosyl-L-methionine</name>
        <dbReference type="ChEBI" id="CHEBI:59789"/>
    </ligand>
</feature>
<feature type="binding site" evidence="1">
    <location>
        <begin position="163"/>
        <end position="164"/>
    </location>
    <ligand>
        <name>S-adenosyl-L-methionine</name>
        <dbReference type="ChEBI" id="CHEBI:59789"/>
    </ligand>
</feature>
<keyword id="KW-0489">Methyltransferase</keyword>
<keyword id="KW-0949">S-adenosyl-L-methionine</keyword>
<keyword id="KW-0808">Transferase</keyword>